<accession>Q5M281</accession>
<comment type="catalytic activity">
    <reaction evidence="2">
        <text>tRNA(His) + L-histidine + ATP = L-histidyl-tRNA(His) + AMP + diphosphate + H(+)</text>
        <dbReference type="Rhea" id="RHEA:17313"/>
        <dbReference type="Rhea" id="RHEA-COMP:9665"/>
        <dbReference type="Rhea" id="RHEA-COMP:9689"/>
        <dbReference type="ChEBI" id="CHEBI:15378"/>
        <dbReference type="ChEBI" id="CHEBI:30616"/>
        <dbReference type="ChEBI" id="CHEBI:33019"/>
        <dbReference type="ChEBI" id="CHEBI:57595"/>
        <dbReference type="ChEBI" id="CHEBI:78442"/>
        <dbReference type="ChEBI" id="CHEBI:78527"/>
        <dbReference type="ChEBI" id="CHEBI:456215"/>
        <dbReference type="EC" id="6.1.1.21"/>
    </reaction>
</comment>
<comment type="subunit">
    <text evidence="2">Homodimer.</text>
</comment>
<comment type="subcellular location">
    <subcellularLocation>
        <location evidence="2">Cytoplasm</location>
    </subcellularLocation>
</comment>
<comment type="similarity">
    <text evidence="2">Belongs to the class-II aminoacyl-tRNA synthetase family.</text>
</comment>
<dbReference type="EC" id="6.1.1.21" evidence="2"/>
<dbReference type="EMBL" id="CP000023">
    <property type="protein sequence ID" value="AAV61565.1"/>
    <property type="molecule type" value="Genomic_DNA"/>
</dbReference>
<dbReference type="RefSeq" id="WP_002946362.1">
    <property type="nucleotide sequence ID" value="NC_006448.1"/>
</dbReference>
<dbReference type="SMR" id="Q5M281"/>
<dbReference type="STRING" id="264199.stu1971"/>
<dbReference type="GeneID" id="66899697"/>
<dbReference type="KEGG" id="stl:stu1971"/>
<dbReference type="PATRIC" id="fig|264199.4.peg.1954"/>
<dbReference type="eggNOG" id="COG0124">
    <property type="taxonomic scope" value="Bacteria"/>
</dbReference>
<dbReference type="HOGENOM" id="CLU_025113_1_1_9"/>
<dbReference type="Proteomes" id="UP000001170">
    <property type="component" value="Chromosome"/>
</dbReference>
<dbReference type="GO" id="GO:0005737">
    <property type="term" value="C:cytoplasm"/>
    <property type="evidence" value="ECO:0007669"/>
    <property type="project" value="UniProtKB-SubCell"/>
</dbReference>
<dbReference type="GO" id="GO:0005524">
    <property type="term" value="F:ATP binding"/>
    <property type="evidence" value="ECO:0007669"/>
    <property type="project" value="UniProtKB-UniRule"/>
</dbReference>
<dbReference type="GO" id="GO:0140096">
    <property type="term" value="F:catalytic activity, acting on a protein"/>
    <property type="evidence" value="ECO:0007669"/>
    <property type="project" value="UniProtKB-ARBA"/>
</dbReference>
<dbReference type="GO" id="GO:0004821">
    <property type="term" value="F:histidine-tRNA ligase activity"/>
    <property type="evidence" value="ECO:0007669"/>
    <property type="project" value="UniProtKB-UniRule"/>
</dbReference>
<dbReference type="GO" id="GO:0016740">
    <property type="term" value="F:transferase activity"/>
    <property type="evidence" value="ECO:0007669"/>
    <property type="project" value="UniProtKB-ARBA"/>
</dbReference>
<dbReference type="GO" id="GO:0006427">
    <property type="term" value="P:histidyl-tRNA aminoacylation"/>
    <property type="evidence" value="ECO:0007669"/>
    <property type="project" value="UniProtKB-UniRule"/>
</dbReference>
<dbReference type="CDD" id="cd00773">
    <property type="entry name" value="HisRS-like_core"/>
    <property type="match status" value="1"/>
</dbReference>
<dbReference type="CDD" id="cd00859">
    <property type="entry name" value="HisRS_anticodon"/>
    <property type="match status" value="1"/>
</dbReference>
<dbReference type="FunFam" id="3.30.930.10:FF:000005">
    <property type="entry name" value="Histidine--tRNA ligase"/>
    <property type="match status" value="1"/>
</dbReference>
<dbReference type="Gene3D" id="3.40.50.800">
    <property type="entry name" value="Anticodon-binding domain"/>
    <property type="match status" value="1"/>
</dbReference>
<dbReference type="Gene3D" id="3.30.930.10">
    <property type="entry name" value="Bira Bifunctional Protein, Domain 2"/>
    <property type="match status" value="1"/>
</dbReference>
<dbReference type="HAMAP" id="MF_00127">
    <property type="entry name" value="His_tRNA_synth"/>
    <property type="match status" value="1"/>
</dbReference>
<dbReference type="InterPro" id="IPR006195">
    <property type="entry name" value="aa-tRNA-synth_II"/>
</dbReference>
<dbReference type="InterPro" id="IPR045864">
    <property type="entry name" value="aa-tRNA-synth_II/BPL/LPL"/>
</dbReference>
<dbReference type="InterPro" id="IPR004154">
    <property type="entry name" value="Anticodon-bd"/>
</dbReference>
<dbReference type="InterPro" id="IPR036621">
    <property type="entry name" value="Anticodon-bd_dom_sf"/>
</dbReference>
<dbReference type="InterPro" id="IPR015807">
    <property type="entry name" value="His-tRNA-ligase"/>
</dbReference>
<dbReference type="InterPro" id="IPR041715">
    <property type="entry name" value="HisRS-like_core"/>
</dbReference>
<dbReference type="InterPro" id="IPR004516">
    <property type="entry name" value="HisRS/HisZ"/>
</dbReference>
<dbReference type="InterPro" id="IPR033656">
    <property type="entry name" value="HisRS_anticodon"/>
</dbReference>
<dbReference type="NCBIfam" id="TIGR00442">
    <property type="entry name" value="hisS"/>
    <property type="match status" value="1"/>
</dbReference>
<dbReference type="PANTHER" id="PTHR43707:SF1">
    <property type="entry name" value="HISTIDINE--TRNA LIGASE, MITOCHONDRIAL-RELATED"/>
    <property type="match status" value="1"/>
</dbReference>
<dbReference type="PANTHER" id="PTHR43707">
    <property type="entry name" value="HISTIDYL-TRNA SYNTHETASE"/>
    <property type="match status" value="1"/>
</dbReference>
<dbReference type="Pfam" id="PF03129">
    <property type="entry name" value="HGTP_anticodon"/>
    <property type="match status" value="1"/>
</dbReference>
<dbReference type="Pfam" id="PF13393">
    <property type="entry name" value="tRNA-synt_His"/>
    <property type="match status" value="1"/>
</dbReference>
<dbReference type="PIRSF" id="PIRSF001549">
    <property type="entry name" value="His-tRNA_synth"/>
    <property type="match status" value="1"/>
</dbReference>
<dbReference type="SUPFAM" id="SSF52954">
    <property type="entry name" value="Class II aaRS ABD-related"/>
    <property type="match status" value="1"/>
</dbReference>
<dbReference type="SUPFAM" id="SSF55681">
    <property type="entry name" value="Class II aaRS and biotin synthetases"/>
    <property type="match status" value="1"/>
</dbReference>
<dbReference type="PROSITE" id="PS50862">
    <property type="entry name" value="AA_TRNA_LIGASE_II"/>
    <property type="match status" value="1"/>
</dbReference>
<name>SYH_STRT2</name>
<organism>
    <name type="scientific">Streptococcus thermophilus (strain ATCC BAA-250 / LMG 18311)</name>
    <dbReference type="NCBI Taxonomy" id="264199"/>
    <lineage>
        <taxon>Bacteria</taxon>
        <taxon>Bacillati</taxon>
        <taxon>Bacillota</taxon>
        <taxon>Bacilli</taxon>
        <taxon>Lactobacillales</taxon>
        <taxon>Streptococcaceae</taxon>
        <taxon>Streptococcus</taxon>
    </lineage>
</organism>
<sequence>MKLQKPKGTQDILPGDSAKWQYVENVARETFKKYNYGEIRTPMFEHYEVISRSVGDTTDIVTKEMYDFHDKGDRHITLRPEGTAPVVRSYVENKLFAPEVQKPVKVYYIGSMFRYERPQAGRLREFHQLGVECFGSKNPATDVETIAMAYQLFNTLGIKDVTLHLNSLGNTDSRLAYRQALIDYLTPMRESLSKDSQRRLEENPLRVLDSKEKEDKVAVENAPSILDYLDEESQTHFDEVRAMLDSLNIPYVIDTNMVRGLDYYNHTIFEFITNIDKSELTICAGGRYDSLVEYFGGPETAGFGFGLGLERLLLVLDKQGIKLPVEESLDVYIAVLGSGANGKALELVQSIRYQGFKAERDYLGRKIKAQFKSADTFKAKTVITLGESEVESGVVKVKNNATREEVTVSFEELTTNFATVLKQLEK</sequence>
<evidence type="ECO:0000250" key="1"/>
<evidence type="ECO:0000255" key="2">
    <source>
        <dbReference type="HAMAP-Rule" id="MF_00127"/>
    </source>
</evidence>
<feature type="initiator methionine" description="Removed" evidence="1">
    <location>
        <position position="1"/>
    </location>
</feature>
<feature type="chain" id="PRO_0000136271" description="Histidine--tRNA ligase">
    <location>
        <begin position="2"/>
        <end position="426"/>
    </location>
</feature>
<proteinExistence type="inferred from homology"/>
<gene>
    <name evidence="2" type="primary">hisS</name>
    <name type="ordered locus">stu1971</name>
</gene>
<keyword id="KW-0030">Aminoacyl-tRNA synthetase</keyword>
<keyword id="KW-0067">ATP-binding</keyword>
<keyword id="KW-0963">Cytoplasm</keyword>
<keyword id="KW-0436">Ligase</keyword>
<keyword id="KW-0547">Nucleotide-binding</keyword>
<keyword id="KW-0648">Protein biosynthesis</keyword>
<keyword id="KW-1185">Reference proteome</keyword>
<protein>
    <recommendedName>
        <fullName evidence="2">Histidine--tRNA ligase</fullName>
        <ecNumber evidence="2">6.1.1.21</ecNumber>
    </recommendedName>
    <alternativeName>
        <fullName evidence="2">Histidyl-tRNA synthetase</fullName>
        <shortName evidence="2">HisRS</shortName>
    </alternativeName>
</protein>
<reference key="1">
    <citation type="journal article" date="2004" name="Nat. Biotechnol.">
        <title>Complete sequence and comparative genome analysis of the dairy bacterium Streptococcus thermophilus.</title>
        <authorList>
            <person name="Bolotin A."/>
            <person name="Quinquis B."/>
            <person name="Renault P."/>
            <person name="Sorokin A."/>
            <person name="Ehrlich S.D."/>
            <person name="Kulakauskas S."/>
            <person name="Lapidus A."/>
            <person name="Goltsman E."/>
            <person name="Mazur M."/>
            <person name="Pusch G.D."/>
            <person name="Fonstein M."/>
            <person name="Overbeek R."/>
            <person name="Kyprides N."/>
            <person name="Purnelle B."/>
            <person name="Prozzi D."/>
            <person name="Ngui K."/>
            <person name="Masuy D."/>
            <person name="Hancy F."/>
            <person name="Burteau S."/>
            <person name="Boutry M."/>
            <person name="Delcour J."/>
            <person name="Goffeau A."/>
            <person name="Hols P."/>
        </authorList>
    </citation>
    <scope>NUCLEOTIDE SEQUENCE [LARGE SCALE GENOMIC DNA]</scope>
    <source>
        <strain>ATCC BAA-250 / LMG 18311</strain>
    </source>
</reference>